<reference key="1">
    <citation type="journal article" date="1996" name="Oncogene">
        <title>A follistatin-like gene, mac25, may act as a growth suppressor of osteosarcoma cells.</title>
        <authorList>
            <person name="Kato M.V."/>
            <person name="Sato H."/>
            <person name="Tsukada T."/>
            <person name="Ikawa Y."/>
            <person name="Aizawa S."/>
            <person name="Nagayoshi M."/>
        </authorList>
    </citation>
    <scope>NUCLEOTIDE SEQUENCE [MRNA]</scope>
    <scope>RNA EDITING OF POSITION 94</scope>
    <source>
        <tissue>Spleen</tissue>
    </source>
</reference>
<reference key="2">
    <citation type="journal article" date="2000" name="Mol. Med.">
        <title>A secreted tumor-suppressor, mac25, with activin-binding activity.</title>
        <authorList>
            <person name="Kato M.V."/>
        </authorList>
    </citation>
    <scope>SEQUENCE REVISION</scope>
</reference>
<reference key="3">
    <citation type="journal article" date="2000" name="Biochem. Biophys. Res. Commun.">
        <title>Methylation and downregulated expression of mac25/insulin-like growth factor binding protein-7 is associated with liver tumorigenesis in SV40T/t antigen transgenic mice, screened by restriction landmark genomic scanning for methylation (RLGS-M).</title>
        <authorList>
            <person name="Komatsu S."/>
            <person name="Okazaki Y."/>
            <person name="Tateno M."/>
            <person name="Kawai J."/>
            <person name="Konno H."/>
            <person name="Kusakabe M."/>
            <person name="Yoshiki A."/>
            <person name="Muramatsu M."/>
            <person name="Held W.A."/>
            <person name="Hayashizaki Y."/>
        </authorList>
    </citation>
    <scope>NUCLEOTIDE SEQUENCE [MRNA]</scope>
    <scope>TISSUE SPECIFICITY</scope>
    <source>
        <strain>C57BL/6J</strain>
    </source>
</reference>
<reference key="4">
    <citation type="journal article" date="2000" name="Biochem. Biophys. Res. Commun.">
        <title>Characterization of the promoter of the murine mac25 gene.</title>
        <authorList>
            <person name="Kanemitsu N."/>
            <person name="Kato M.V."/>
            <person name="Miki T."/>
            <person name="Komatsu S."/>
            <person name="Okazaki Y."/>
            <person name="Hayashizaki Y."/>
            <person name="Sakai T."/>
        </authorList>
    </citation>
    <scope>NUCLEOTIDE SEQUENCE [GENOMIC DNA] OF 1-157</scope>
</reference>
<reference key="5">
    <citation type="journal article" date="2008" name="RNA">
        <title>Screening of human SNP database identifies recoding sites of A-to-I RNA editing.</title>
        <authorList>
            <person name="Gommans W.M."/>
            <person name="Tatalias N.E."/>
            <person name="Sie C.P."/>
            <person name="Dupuis D."/>
            <person name="Vendetti N."/>
            <person name="Smith L."/>
            <person name="Kaushal R."/>
            <person name="Maas S."/>
        </authorList>
    </citation>
    <scope>RNA EDITING OF POSITIONS 77 AND 94</scope>
</reference>
<reference key="6">
    <citation type="journal article" date="2010" name="Cell">
        <title>A tissue-specific atlas of mouse protein phosphorylation and expression.</title>
        <authorList>
            <person name="Huttlin E.L."/>
            <person name="Jedrychowski M.P."/>
            <person name="Elias J.E."/>
            <person name="Goswami T."/>
            <person name="Rad R."/>
            <person name="Beausoleil S.A."/>
            <person name="Villen J."/>
            <person name="Haas W."/>
            <person name="Sowa M.E."/>
            <person name="Gygi S.P."/>
        </authorList>
    </citation>
    <scope>IDENTIFICATION BY MASS SPECTROMETRY [LARGE SCALE ANALYSIS]</scope>
    <source>
        <tissue>Heart</tissue>
        <tissue>Kidney</tissue>
        <tissue>Lung</tissue>
        <tissue>Spleen</tissue>
        <tissue>Testis</tissue>
    </source>
</reference>
<proteinExistence type="evidence at protein level"/>
<dbReference type="EMBL" id="L75822">
    <property type="protein sequence ID" value="AAC37696.2"/>
    <property type="molecule type" value="mRNA"/>
</dbReference>
<dbReference type="EMBL" id="AB012886">
    <property type="protein sequence ID" value="BAA33569.1"/>
    <property type="molecule type" value="mRNA"/>
</dbReference>
<dbReference type="EMBL" id="AB042198">
    <property type="protein sequence ID" value="BAB17228.1"/>
    <property type="status" value="ALT_INIT"/>
    <property type="molecule type" value="Genomic_DNA"/>
</dbReference>
<dbReference type="CCDS" id="CCDS51529.1"/>
<dbReference type="RefSeq" id="NP_032074.4">
    <property type="nucleotide sequence ID" value="NM_008048.4"/>
</dbReference>
<dbReference type="SMR" id="Q61581"/>
<dbReference type="BioGRID" id="205897">
    <property type="interactions" value="7"/>
</dbReference>
<dbReference type="FunCoup" id="Q61581">
    <property type="interactions" value="259"/>
</dbReference>
<dbReference type="STRING" id="10090.ENSMUSP00000128318"/>
<dbReference type="GlyCosmos" id="Q61581">
    <property type="glycosylation" value="1 site, No reported glycans"/>
</dbReference>
<dbReference type="GlyGen" id="Q61581">
    <property type="glycosylation" value="1 site, 1 N-linked glycan (1 site)"/>
</dbReference>
<dbReference type="PhosphoSitePlus" id="Q61581"/>
<dbReference type="CPTAC" id="non-CPTAC-3466"/>
<dbReference type="jPOST" id="Q61581"/>
<dbReference type="PaxDb" id="10090-ENSMUSP00000128318"/>
<dbReference type="PeptideAtlas" id="Q61581"/>
<dbReference type="ProteomicsDB" id="267083"/>
<dbReference type="Pumba" id="Q61581"/>
<dbReference type="DNASU" id="29817"/>
<dbReference type="Ensembl" id="ENSMUST00000046746.10">
    <property type="protein sequence ID" value="ENSMUSP00000045057.8"/>
    <property type="gene ID" value="ENSMUSG00000036256.14"/>
</dbReference>
<dbReference type="GeneID" id="29817"/>
<dbReference type="KEGG" id="mmu:29817"/>
<dbReference type="AGR" id="MGI:1352480"/>
<dbReference type="CTD" id="3490"/>
<dbReference type="MGI" id="MGI:1352480">
    <property type="gene designation" value="Igfbp7"/>
</dbReference>
<dbReference type="eggNOG" id="ENOG502RACD">
    <property type="taxonomic scope" value="Eukaryota"/>
</dbReference>
<dbReference type="GeneTree" id="ENSGT00530000063555"/>
<dbReference type="InParanoid" id="Q61581"/>
<dbReference type="PhylomeDB" id="Q61581"/>
<dbReference type="Reactome" id="R-MMU-381426">
    <property type="pathway name" value="Regulation of Insulin-like Growth Factor (IGF) transport and uptake by Insulin-like Growth Factor Binding Proteins (IGFBPs)"/>
</dbReference>
<dbReference type="Reactome" id="R-MMU-8957275">
    <property type="pathway name" value="Post-translational protein phosphorylation"/>
</dbReference>
<dbReference type="BioGRID-ORCS" id="29817">
    <property type="hits" value="2 hits in 81 CRISPR screens"/>
</dbReference>
<dbReference type="ChiTaRS" id="Igfbp7">
    <property type="organism name" value="mouse"/>
</dbReference>
<dbReference type="PRO" id="PR:Q61581"/>
<dbReference type="Proteomes" id="UP000000589">
    <property type="component" value="Chromosome 5"/>
</dbReference>
<dbReference type="RNAct" id="Q61581">
    <property type="molecule type" value="protein"/>
</dbReference>
<dbReference type="GO" id="GO:0062023">
    <property type="term" value="C:collagen-containing extracellular matrix"/>
    <property type="evidence" value="ECO:0007005"/>
    <property type="project" value="BHF-UCL"/>
</dbReference>
<dbReference type="GO" id="GO:0005615">
    <property type="term" value="C:extracellular space"/>
    <property type="evidence" value="ECO:0007005"/>
    <property type="project" value="BHF-UCL"/>
</dbReference>
<dbReference type="GO" id="GO:0005520">
    <property type="term" value="F:insulin-like growth factor binding"/>
    <property type="evidence" value="ECO:0007669"/>
    <property type="project" value="InterPro"/>
</dbReference>
<dbReference type="GO" id="GO:0007155">
    <property type="term" value="P:cell adhesion"/>
    <property type="evidence" value="ECO:0000250"/>
    <property type="project" value="UniProtKB"/>
</dbReference>
<dbReference type="GO" id="GO:0048839">
    <property type="term" value="P:inner ear development"/>
    <property type="evidence" value="ECO:0000314"/>
    <property type="project" value="MGI"/>
</dbReference>
<dbReference type="GO" id="GO:0001558">
    <property type="term" value="P:regulation of cell growth"/>
    <property type="evidence" value="ECO:0007669"/>
    <property type="project" value="InterPro"/>
</dbReference>
<dbReference type="CDD" id="cd00104">
    <property type="entry name" value="KAZAL_FS"/>
    <property type="match status" value="1"/>
</dbReference>
<dbReference type="FunFam" id="2.60.40.10:FF:000763">
    <property type="entry name" value="Insulin-like growth factor binding protein 7"/>
    <property type="match status" value="1"/>
</dbReference>
<dbReference type="FunFam" id="3.30.60.30:FF:000026">
    <property type="entry name" value="Insulin-like growth factor-binding protein 7"/>
    <property type="match status" value="1"/>
</dbReference>
<dbReference type="FunFam" id="4.10.40.20:FF:000006">
    <property type="entry name" value="insulin-like growth factor-binding protein 7"/>
    <property type="match status" value="1"/>
</dbReference>
<dbReference type="Gene3D" id="3.30.60.30">
    <property type="match status" value="1"/>
</dbReference>
<dbReference type="Gene3D" id="4.10.40.20">
    <property type="match status" value="1"/>
</dbReference>
<dbReference type="Gene3D" id="2.60.40.10">
    <property type="entry name" value="Immunoglobulins"/>
    <property type="match status" value="1"/>
</dbReference>
<dbReference type="InterPro" id="IPR009030">
    <property type="entry name" value="Growth_fac_rcpt_cys_sf"/>
</dbReference>
<dbReference type="InterPro" id="IPR007110">
    <property type="entry name" value="Ig-like_dom"/>
</dbReference>
<dbReference type="InterPro" id="IPR036179">
    <property type="entry name" value="Ig-like_dom_sf"/>
</dbReference>
<dbReference type="InterPro" id="IPR013783">
    <property type="entry name" value="Ig-like_fold"/>
</dbReference>
<dbReference type="InterPro" id="IPR013098">
    <property type="entry name" value="Ig_I-set"/>
</dbReference>
<dbReference type="InterPro" id="IPR003599">
    <property type="entry name" value="Ig_sub"/>
</dbReference>
<dbReference type="InterPro" id="IPR003598">
    <property type="entry name" value="Ig_sub2"/>
</dbReference>
<dbReference type="InterPro" id="IPR000867">
    <property type="entry name" value="IGFBP-like"/>
</dbReference>
<dbReference type="InterPro" id="IPR011390">
    <property type="entry name" value="IGFBP_rP_mac25"/>
</dbReference>
<dbReference type="InterPro" id="IPR002350">
    <property type="entry name" value="Kazal_dom"/>
</dbReference>
<dbReference type="InterPro" id="IPR036058">
    <property type="entry name" value="Kazal_dom_sf"/>
</dbReference>
<dbReference type="PANTHER" id="PTHR14186">
    <property type="entry name" value="INSULIN-LIKE GROWTH FACTOR BINDING PROTEIN-RELATED"/>
    <property type="match status" value="1"/>
</dbReference>
<dbReference type="PANTHER" id="PTHR14186:SF19">
    <property type="entry name" value="INSULIN-LIKE GROWTH FACTOR-BINDING PROTEIN 7"/>
    <property type="match status" value="1"/>
</dbReference>
<dbReference type="Pfam" id="PF07679">
    <property type="entry name" value="I-set"/>
    <property type="match status" value="1"/>
</dbReference>
<dbReference type="Pfam" id="PF00219">
    <property type="entry name" value="IGFBP"/>
    <property type="match status" value="1"/>
</dbReference>
<dbReference type="Pfam" id="PF07648">
    <property type="entry name" value="Kazal_2"/>
    <property type="match status" value="1"/>
</dbReference>
<dbReference type="PIRSF" id="PIRSF018239">
    <property type="entry name" value="IGFBP_rP_mac25"/>
    <property type="match status" value="1"/>
</dbReference>
<dbReference type="SMART" id="SM00121">
    <property type="entry name" value="IB"/>
    <property type="match status" value="1"/>
</dbReference>
<dbReference type="SMART" id="SM00409">
    <property type="entry name" value="IG"/>
    <property type="match status" value="1"/>
</dbReference>
<dbReference type="SMART" id="SM00408">
    <property type="entry name" value="IGc2"/>
    <property type="match status" value="1"/>
</dbReference>
<dbReference type="SMART" id="SM00280">
    <property type="entry name" value="KAZAL"/>
    <property type="match status" value="1"/>
</dbReference>
<dbReference type="SUPFAM" id="SSF57184">
    <property type="entry name" value="Growth factor receptor domain"/>
    <property type="match status" value="1"/>
</dbReference>
<dbReference type="SUPFAM" id="SSF48726">
    <property type="entry name" value="Immunoglobulin"/>
    <property type="match status" value="1"/>
</dbReference>
<dbReference type="SUPFAM" id="SSF100895">
    <property type="entry name" value="Kazal-type serine protease inhibitors"/>
    <property type="match status" value="1"/>
</dbReference>
<dbReference type="PROSITE" id="PS50835">
    <property type="entry name" value="IG_LIKE"/>
    <property type="match status" value="1"/>
</dbReference>
<dbReference type="PROSITE" id="PS51323">
    <property type="entry name" value="IGFBP_N_2"/>
    <property type="match status" value="1"/>
</dbReference>
<dbReference type="PROSITE" id="PS51465">
    <property type="entry name" value="KAZAL_2"/>
    <property type="match status" value="1"/>
</dbReference>
<feature type="signal peptide" evidence="2">
    <location>
        <begin position="1"/>
        <end position="25"/>
    </location>
</feature>
<feature type="chain" id="PRO_0000014393" description="Insulin-like growth factor-binding protein 7">
    <location>
        <begin position="26"/>
        <end position="281"/>
    </location>
</feature>
<feature type="domain" description="IGFBP N-terminal" evidence="4">
    <location>
        <begin position="27"/>
        <end position="113"/>
    </location>
</feature>
<feature type="domain" description="Kazal-like" evidence="5">
    <location>
        <begin position="98"/>
        <end position="157"/>
    </location>
</feature>
<feature type="domain" description="Ig-like C2-type">
    <location>
        <begin position="159"/>
        <end position="263"/>
    </location>
</feature>
<feature type="modified residue" description="Phosphoserine" evidence="1">
    <location>
        <position position="238"/>
    </location>
</feature>
<feature type="glycosylation site" description="N-linked (GlcNAc...) asparagine" evidence="2">
    <location>
        <position position="170"/>
    </location>
</feature>
<feature type="disulfide bond" evidence="4">
    <location>
        <begin position="31"/>
        <end position="56"/>
    </location>
</feature>
<feature type="disulfide bond" evidence="4">
    <location>
        <begin position="34"/>
        <end position="58"/>
    </location>
</feature>
<feature type="disulfide bond" evidence="4">
    <location>
        <begin position="39"/>
        <end position="59"/>
    </location>
</feature>
<feature type="disulfide bond" evidence="4">
    <location>
        <begin position="47"/>
        <end position="62"/>
    </location>
</feature>
<feature type="disulfide bond" evidence="4">
    <location>
        <begin position="70"/>
        <end position="86"/>
    </location>
</feature>
<feature type="disulfide bond" evidence="4">
    <location>
        <begin position="80"/>
        <end position="110"/>
    </location>
</feature>
<feature type="disulfide bond" evidence="9">
    <location>
        <begin position="112"/>
        <end position="130"/>
    </location>
</feature>
<feature type="disulfide bond" evidence="5">
    <location>
        <begin position="119"/>
        <end position="155"/>
    </location>
</feature>
<feature type="disulfide bond" evidence="3">
    <location>
        <begin position="180"/>
        <end position="247"/>
    </location>
</feature>
<feature type="sequence variant" description="In RNA edited version.">
    <original>R</original>
    <variation>G</variation>
    <location>
        <position position="77"/>
    </location>
</feature>
<feature type="sequence variant" description="In RNA edited version.">
    <original>K</original>
    <variation>R</variation>
    <location>
        <position position="94"/>
    </location>
</feature>
<feature type="sequence conflict" description="In Ref. 1; AAC37696." evidence="9" ref="1">
    <original>A</original>
    <variation>P</variation>
    <location>
        <position position="146"/>
    </location>
</feature>
<evidence type="ECO:0000250" key="1">
    <source>
        <dbReference type="UniProtKB" id="Q16270"/>
    </source>
</evidence>
<evidence type="ECO:0000255" key="2"/>
<evidence type="ECO:0000255" key="3">
    <source>
        <dbReference type="PROSITE-ProRule" id="PRU00114"/>
    </source>
</evidence>
<evidence type="ECO:0000255" key="4">
    <source>
        <dbReference type="PROSITE-ProRule" id="PRU00653"/>
    </source>
</evidence>
<evidence type="ECO:0000255" key="5">
    <source>
        <dbReference type="PROSITE-ProRule" id="PRU00798"/>
    </source>
</evidence>
<evidence type="ECO:0000269" key="6">
    <source>
    </source>
</evidence>
<evidence type="ECO:0000269" key="7">
    <source>
    </source>
</evidence>
<evidence type="ECO:0000269" key="8">
    <source>
    </source>
</evidence>
<evidence type="ECO:0000305" key="9"/>
<sequence>MERPPRALLLGAAGLLLLLLPLSSSSSSDACGPCVPASCPALPRLGCPLGETRDACGCCPVCARGEGEPCGGGAAGRGHCAPGMECVKSRKRRKGKAGAAAGGPATLAVCVCKSRYPVCGSNGITYPSGCQLRAASLRAESRGEKAITQVSKGTCEQGPSIVTPPKDIWNVTGAKVFLSCEVIGIPTPVLIWNKVKRDHSGVQRTELLPGDRENLAIQTRGGPEKHEVTGWVLVSPLSKEDAGEYECHASNSQGQASAAAKITVVDALHEIPLKKGEGAQL</sequence>
<comment type="function">
    <text evidence="1">Binds IGF1 and IGF2 with a relatively low affinity. Stimulates prostacyclin (PGI2) production. Stimulates cell adhesion. Acts as a ligand for CD93 to play a role in angiogenesis.</text>
</comment>
<comment type="subunit">
    <text evidence="1">May interact with VPS24/CHMP3; the relevance of such interaction however remains unclear. Interacts with CD93; this interaction plays a role in endothelial cells angiogenesis.</text>
</comment>
<comment type="subcellular location">
    <subcellularLocation>
        <location evidence="1">Secreted</location>
    </subcellularLocation>
</comment>
<comment type="tissue specificity">
    <text evidence="6">Expressed at high levels in lung, kidney, small intestine, testis and uterus and at moderate levels in liver.</text>
</comment>
<comment type="induction">
    <text>By retinoic acid.</text>
</comment>
<comment type="PTM">
    <text evidence="1">N-glycosylated.</text>
</comment>
<comment type="RNA editing">
    <location>
        <position position="77" evidence="7"/>
    </location>
    <location>
        <position position="94" evidence="7 8"/>
    </location>
    <text>Partially edited. Position 77 seems to be edited at about 56% and position 94 at about 58%.</text>
</comment>
<comment type="sequence caution" evidence="9">
    <conflict type="erroneous initiation">
        <sequence resource="EMBL-CDS" id="BAB17228"/>
    </conflict>
</comment>
<gene>
    <name type="primary">Igfbp7</name>
    <name type="synonym">Mac25</name>
</gene>
<organism>
    <name type="scientific">Mus musculus</name>
    <name type="common">Mouse</name>
    <dbReference type="NCBI Taxonomy" id="10090"/>
    <lineage>
        <taxon>Eukaryota</taxon>
        <taxon>Metazoa</taxon>
        <taxon>Chordata</taxon>
        <taxon>Craniata</taxon>
        <taxon>Vertebrata</taxon>
        <taxon>Euteleostomi</taxon>
        <taxon>Mammalia</taxon>
        <taxon>Eutheria</taxon>
        <taxon>Euarchontoglires</taxon>
        <taxon>Glires</taxon>
        <taxon>Rodentia</taxon>
        <taxon>Myomorpha</taxon>
        <taxon>Muroidea</taxon>
        <taxon>Muridae</taxon>
        <taxon>Murinae</taxon>
        <taxon>Mus</taxon>
        <taxon>Mus</taxon>
    </lineage>
</organism>
<protein>
    <recommendedName>
        <fullName>Insulin-like growth factor-binding protein 7</fullName>
        <shortName>IBP-7</shortName>
        <shortName>IGF-binding protein 7</shortName>
        <shortName>IGFBP-7</shortName>
    </recommendedName>
    <alternativeName>
        <fullName>MAC25 protein</fullName>
    </alternativeName>
</protein>
<keyword id="KW-0130">Cell adhesion</keyword>
<keyword id="KW-1015">Disulfide bond</keyword>
<keyword id="KW-0325">Glycoprotein</keyword>
<keyword id="KW-0340">Growth factor binding</keyword>
<keyword id="KW-0393">Immunoglobulin domain</keyword>
<keyword id="KW-0597">Phosphoprotein</keyword>
<keyword id="KW-1185">Reference proteome</keyword>
<keyword id="KW-0691">RNA editing</keyword>
<keyword id="KW-0964">Secreted</keyword>
<keyword id="KW-0732">Signal</keyword>
<name>IBP7_MOUSE</name>
<accession>Q61581</accession>
<accession>O88812</accession>
<accession>Q9EQW0</accession>